<sequence>MNYFRYKQFNKDVITVAVGYYLRYTLSYRDISEILRERGVNVHHSTVYRWVQEYAPILYQIWKKKHKKAYYKWRIDETYIKIKGKWSYLYRAIDAEGHTLDIWLRKQRDNHSAYAFIKRLIKQFGKPQKVITDQAPSTKVAMAKVIKAFKLKPDCHCTSKYLNNLIEQDHRHIKVRKTRYQSINTAKNTLKGIECIYALYKKNRRSLQIYGFSPCHEISIMLAS</sequence>
<evidence type="ECO:0000250" key="1"/>
<evidence type="ECO:0000255" key="2"/>
<evidence type="ECO:0000255" key="3">
    <source>
        <dbReference type="PROSITE-ProRule" id="PRU00457"/>
    </source>
</evidence>
<proteinExistence type="inferred from homology"/>
<comment type="function">
    <text evidence="1">Involved in the transposition of the insertion sequence.</text>
</comment>
<gene>
    <name type="primary">tnp1</name>
    <name type="ordered locus">SAV0027</name>
</gene>
<gene>
    <name type="primary">tnp2</name>
    <name type="ordered locus">SAV0036</name>
</gene>
<protein>
    <recommendedName>
        <fullName>Transposase for insertion sequence-like element IS431mec</fullName>
    </recommendedName>
</protein>
<accession>P0A043</accession>
<accession>P19380</accession>
<accession>Q932L7</accession>
<keyword id="KW-0233">DNA recombination</keyword>
<keyword id="KW-0238">DNA-binding</keyword>
<keyword id="KW-0814">Transposable element</keyword>
<keyword id="KW-0815">Transposition</keyword>
<feature type="chain" id="PRO_0000075436" description="Transposase for insertion sequence-like element IS431mec">
    <location>
        <begin position="1"/>
        <end position="224"/>
    </location>
</feature>
<feature type="domain" description="Integrase catalytic" evidence="3">
    <location>
        <begin position="73"/>
        <end position="222"/>
    </location>
</feature>
<feature type="DNA-binding region" description="H-T-H motif" evidence="2">
    <location>
        <begin position="33"/>
        <end position="52"/>
    </location>
</feature>
<reference key="1">
    <citation type="journal article" date="2001" name="Lancet">
        <title>Whole genome sequencing of meticillin-resistant Staphylococcus aureus.</title>
        <authorList>
            <person name="Kuroda M."/>
            <person name="Ohta T."/>
            <person name="Uchiyama I."/>
            <person name="Baba T."/>
            <person name="Yuzawa H."/>
            <person name="Kobayashi I."/>
            <person name="Cui L."/>
            <person name="Oguchi A."/>
            <person name="Aoki K."/>
            <person name="Nagai Y."/>
            <person name="Lian J.-Q."/>
            <person name="Ito T."/>
            <person name="Kanamori M."/>
            <person name="Matsumaru H."/>
            <person name="Maruyama A."/>
            <person name="Murakami H."/>
            <person name="Hosoyama A."/>
            <person name="Mizutani-Ui Y."/>
            <person name="Takahashi N.K."/>
            <person name="Sawano T."/>
            <person name="Inoue R."/>
            <person name="Kaito C."/>
            <person name="Sekimizu K."/>
            <person name="Hirakawa H."/>
            <person name="Kuhara S."/>
            <person name="Goto S."/>
            <person name="Yabuzaki J."/>
            <person name="Kanehisa M."/>
            <person name="Yamashita A."/>
            <person name="Oshima K."/>
            <person name="Furuya K."/>
            <person name="Yoshino C."/>
            <person name="Shiba T."/>
            <person name="Hattori M."/>
            <person name="Ogasawara N."/>
            <person name="Hayashi H."/>
            <person name="Hiramatsu K."/>
        </authorList>
    </citation>
    <scope>NUCLEOTIDE SEQUENCE [LARGE SCALE GENOMIC DNA]</scope>
    <source>
        <strain>Mu50 / ATCC 700699</strain>
    </source>
</reference>
<organism>
    <name type="scientific">Staphylococcus aureus (strain Mu50 / ATCC 700699)</name>
    <dbReference type="NCBI Taxonomy" id="158878"/>
    <lineage>
        <taxon>Bacteria</taxon>
        <taxon>Bacillati</taxon>
        <taxon>Bacillota</taxon>
        <taxon>Bacilli</taxon>
        <taxon>Bacillales</taxon>
        <taxon>Staphylococcaceae</taxon>
        <taxon>Staphylococcus</taxon>
    </lineage>
</organism>
<dbReference type="EMBL" id="BA000017">
    <property type="protein sequence ID" value="BAB56189.1"/>
    <property type="molecule type" value="Genomic_DNA"/>
</dbReference>
<dbReference type="EMBL" id="BA000017">
    <property type="protein sequence ID" value="BAB56198.2"/>
    <property type="molecule type" value="Genomic_DNA"/>
</dbReference>
<dbReference type="RefSeq" id="WP_001106057.1">
    <property type="nucleotide sequence ID" value="NC_002758.2"/>
</dbReference>
<dbReference type="SMR" id="P0A043"/>
<dbReference type="KEGG" id="sav:SAV0027"/>
<dbReference type="KEGG" id="sav:SAV0036"/>
<dbReference type="HOGENOM" id="CLU_067322_1_0_9"/>
<dbReference type="PhylomeDB" id="P0A043"/>
<dbReference type="Proteomes" id="UP000002481">
    <property type="component" value="Chromosome"/>
</dbReference>
<dbReference type="GO" id="GO:0003677">
    <property type="term" value="F:DNA binding"/>
    <property type="evidence" value="ECO:0007669"/>
    <property type="project" value="UniProtKB-KW"/>
</dbReference>
<dbReference type="GO" id="GO:0015074">
    <property type="term" value="P:DNA integration"/>
    <property type="evidence" value="ECO:0007669"/>
    <property type="project" value="InterPro"/>
</dbReference>
<dbReference type="GO" id="GO:0006310">
    <property type="term" value="P:DNA recombination"/>
    <property type="evidence" value="ECO:0007669"/>
    <property type="project" value="UniProtKB-KW"/>
</dbReference>
<dbReference type="GO" id="GO:0032196">
    <property type="term" value="P:transposition"/>
    <property type="evidence" value="ECO:0007669"/>
    <property type="project" value="UniProtKB-KW"/>
</dbReference>
<dbReference type="Gene3D" id="3.30.420.10">
    <property type="entry name" value="Ribonuclease H-like superfamily/Ribonuclease H"/>
    <property type="match status" value="1"/>
</dbReference>
<dbReference type="InterPro" id="IPR032874">
    <property type="entry name" value="DDE_dom"/>
</dbReference>
<dbReference type="InterPro" id="IPR001584">
    <property type="entry name" value="Integrase_cat-core"/>
</dbReference>
<dbReference type="InterPro" id="IPR052183">
    <property type="entry name" value="IS_Transposase"/>
</dbReference>
<dbReference type="InterPro" id="IPR012337">
    <property type="entry name" value="RNaseH-like_sf"/>
</dbReference>
<dbReference type="InterPro" id="IPR036397">
    <property type="entry name" value="RNaseH_sf"/>
</dbReference>
<dbReference type="InterPro" id="IPR047930">
    <property type="entry name" value="Transpos_IS6"/>
</dbReference>
<dbReference type="NCBIfam" id="NF033587">
    <property type="entry name" value="transpos_IS6"/>
    <property type="match status" value="1"/>
</dbReference>
<dbReference type="PANTHER" id="PTHR35528">
    <property type="entry name" value="BLL1675 PROTEIN"/>
    <property type="match status" value="1"/>
</dbReference>
<dbReference type="PANTHER" id="PTHR35528:SF3">
    <property type="entry name" value="BLL1675 PROTEIN"/>
    <property type="match status" value="1"/>
</dbReference>
<dbReference type="Pfam" id="PF13610">
    <property type="entry name" value="DDE_Tnp_IS240"/>
    <property type="match status" value="1"/>
</dbReference>
<dbReference type="SUPFAM" id="SSF53098">
    <property type="entry name" value="Ribonuclease H-like"/>
    <property type="match status" value="1"/>
</dbReference>
<dbReference type="PROSITE" id="PS50994">
    <property type="entry name" value="INTEGRASE"/>
    <property type="match status" value="1"/>
</dbReference>
<name>T431_STAAM</name>